<feature type="chain" id="PRO_1000002663" description="UDP-N-acetylglucosamine--N-acetylmuramyl-(pentapeptide) pyrophosphoryl-undecaprenol N-acetylglucosamine transferase">
    <location>
        <begin position="1"/>
        <end position="357"/>
    </location>
</feature>
<feature type="binding site" evidence="1">
    <location>
        <begin position="10"/>
        <end position="12"/>
    </location>
    <ligand>
        <name>UDP-N-acetyl-alpha-D-glucosamine</name>
        <dbReference type="ChEBI" id="CHEBI:57705"/>
    </ligand>
</feature>
<feature type="binding site" evidence="1">
    <location>
        <position position="124"/>
    </location>
    <ligand>
        <name>UDP-N-acetyl-alpha-D-glucosamine</name>
        <dbReference type="ChEBI" id="CHEBI:57705"/>
    </ligand>
</feature>
<feature type="binding site" evidence="1">
    <location>
        <position position="189"/>
    </location>
    <ligand>
        <name>UDP-N-acetyl-alpha-D-glucosamine</name>
        <dbReference type="ChEBI" id="CHEBI:57705"/>
    </ligand>
</feature>
<feature type="binding site" evidence="1">
    <location>
        <position position="244"/>
    </location>
    <ligand>
        <name>UDP-N-acetyl-alpha-D-glucosamine</name>
        <dbReference type="ChEBI" id="CHEBI:57705"/>
    </ligand>
</feature>
<feature type="binding site" evidence="1">
    <location>
        <position position="289"/>
    </location>
    <ligand>
        <name>UDP-N-acetyl-alpha-D-glucosamine</name>
        <dbReference type="ChEBI" id="CHEBI:57705"/>
    </ligand>
</feature>
<evidence type="ECO:0000255" key="1">
    <source>
        <dbReference type="HAMAP-Rule" id="MF_00033"/>
    </source>
</evidence>
<reference key="1">
    <citation type="journal article" date="2007" name="J. Bacteriol.">
        <title>The complete genome sequence of the lactic acid bacterial paradigm Lactococcus lactis subsp. cremoris MG1363.</title>
        <authorList>
            <person name="Wegmann U."/>
            <person name="O'Connell-Motherway M."/>
            <person name="Zomer A."/>
            <person name="Buist G."/>
            <person name="Shearman C."/>
            <person name="Canchaya C."/>
            <person name="Ventura M."/>
            <person name="Goesmann A."/>
            <person name="Gasson M.J."/>
            <person name="Kuipers O.P."/>
            <person name="van Sinderen D."/>
            <person name="Kok J."/>
        </authorList>
    </citation>
    <scope>NUCLEOTIDE SEQUENCE [LARGE SCALE GENOMIC DNA]</scope>
    <source>
        <strain>MG1363</strain>
    </source>
</reference>
<proteinExistence type="inferred from homology"/>
<protein>
    <recommendedName>
        <fullName evidence="1">UDP-N-acetylglucosamine--N-acetylmuramyl-(pentapeptide) pyrophosphoryl-undecaprenol N-acetylglucosamine transferase</fullName>
        <ecNumber evidence="1">2.4.1.227</ecNumber>
    </recommendedName>
    <alternativeName>
        <fullName evidence="1">Undecaprenyl-PP-MurNAc-pentapeptide-UDPGlcNAc GlcNAc transferase</fullName>
    </alternativeName>
</protein>
<keyword id="KW-0131">Cell cycle</keyword>
<keyword id="KW-0132">Cell division</keyword>
<keyword id="KW-1003">Cell membrane</keyword>
<keyword id="KW-0133">Cell shape</keyword>
<keyword id="KW-0961">Cell wall biogenesis/degradation</keyword>
<keyword id="KW-0328">Glycosyltransferase</keyword>
<keyword id="KW-0472">Membrane</keyword>
<keyword id="KW-0573">Peptidoglycan synthesis</keyword>
<keyword id="KW-0808">Transferase</keyword>
<name>MURG_LACLM</name>
<comment type="function">
    <text evidence="1">Cell wall formation. Catalyzes the transfer of a GlcNAc subunit on undecaprenyl-pyrophosphoryl-MurNAc-pentapeptide (lipid intermediate I) to form undecaprenyl-pyrophosphoryl-MurNAc-(pentapeptide)GlcNAc (lipid intermediate II).</text>
</comment>
<comment type="catalytic activity">
    <reaction evidence="1">
        <text>Mur2Ac(oyl-L-Ala-gamma-D-Glu-L-Lys-D-Ala-D-Ala)-di-trans,octa-cis-undecaprenyl diphosphate + UDP-N-acetyl-alpha-D-glucosamine = beta-D-GlcNAc-(1-&gt;4)-Mur2Ac(oyl-L-Ala-gamma-D-Glu-L-Lys-D-Ala-D-Ala)-di-trans,octa-cis-undecaprenyl diphosphate + UDP + H(+)</text>
        <dbReference type="Rhea" id="RHEA:23192"/>
        <dbReference type="ChEBI" id="CHEBI:15378"/>
        <dbReference type="ChEBI" id="CHEBI:57705"/>
        <dbReference type="ChEBI" id="CHEBI:58223"/>
        <dbReference type="ChEBI" id="CHEBI:60032"/>
        <dbReference type="ChEBI" id="CHEBI:60033"/>
        <dbReference type="EC" id="2.4.1.227"/>
    </reaction>
</comment>
<comment type="pathway">
    <text evidence="1">Cell wall biogenesis; peptidoglycan biosynthesis.</text>
</comment>
<comment type="subcellular location">
    <subcellularLocation>
        <location evidence="1">Cell membrane</location>
        <topology evidence="1">Peripheral membrane protein</topology>
        <orientation evidence="1">Cytoplasmic side</orientation>
    </subcellularLocation>
</comment>
<comment type="similarity">
    <text evidence="1">Belongs to the glycosyltransferase 28 family. MurG subfamily.</text>
</comment>
<sequence length="357" mass="39227">MRIIITGGGTGGHIYPALAFLKYLKQEEPDTEVLYIGTKKGLESKIVPRAGIQLKTVDIQGLRRSLSPQNIKTAYKFFKSVSDAKKIMKDFKPDVVLGTGGYVAGPVVFAAAQLKIPTIIHEGNSFPGITNRFLAKKVDRIAVGFHAAEQYFPSEKTSFTGNPRAQEVADAAAQVEKFEQPTVVIFGGSRGALKLNNAFIEALPELAKRSFKTVYASGEIYYDDYKETFDQYKENPNLDIRPYINNMTELLAKSQLFLGRSGSTTIAEVTALGLPAVYVPSPNVTADQQTKNAQEYVDQGAAIIVKDEELNGQSLVEAISDILENTEKYQEMQRASLKAGVPDASQRLYNLVKEISN</sequence>
<organism>
    <name type="scientific">Lactococcus lactis subsp. cremoris (strain MG1363)</name>
    <dbReference type="NCBI Taxonomy" id="416870"/>
    <lineage>
        <taxon>Bacteria</taxon>
        <taxon>Bacillati</taxon>
        <taxon>Bacillota</taxon>
        <taxon>Bacilli</taxon>
        <taxon>Lactobacillales</taxon>
        <taxon>Streptococcaceae</taxon>
        <taxon>Lactococcus</taxon>
        <taxon>Lactococcus cremoris subsp. cremoris</taxon>
    </lineage>
</organism>
<gene>
    <name evidence="1" type="primary">murG</name>
    <name type="ordered locus">llmg_0913</name>
</gene>
<dbReference type="EC" id="2.4.1.227" evidence="1"/>
<dbReference type="EMBL" id="AM406671">
    <property type="protein sequence ID" value="CAL97507.1"/>
    <property type="molecule type" value="Genomic_DNA"/>
</dbReference>
<dbReference type="RefSeq" id="WP_011676626.1">
    <property type="nucleotide sequence ID" value="NC_009004.1"/>
</dbReference>
<dbReference type="SMR" id="A2RJQ4"/>
<dbReference type="STRING" id="416870.llmg_0913"/>
<dbReference type="CAZy" id="GT28">
    <property type="family name" value="Glycosyltransferase Family 28"/>
</dbReference>
<dbReference type="KEGG" id="llm:llmg_0913"/>
<dbReference type="eggNOG" id="COG0707">
    <property type="taxonomic scope" value="Bacteria"/>
</dbReference>
<dbReference type="HOGENOM" id="CLU_037404_0_1_9"/>
<dbReference type="OrthoDB" id="9808936at2"/>
<dbReference type="PhylomeDB" id="A2RJQ4"/>
<dbReference type="UniPathway" id="UPA00219"/>
<dbReference type="Proteomes" id="UP000000364">
    <property type="component" value="Chromosome"/>
</dbReference>
<dbReference type="GO" id="GO:0005886">
    <property type="term" value="C:plasma membrane"/>
    <property type="evidence" value="ECO:0007669"/>
    <property type="project" value="UniProtKB-SubCell"/>
</dbReference>
<dbReference type="GO" id="GO:0050511">
    <property type="term" value="F:undecaprenyldiphospho-muramoylpentapeptide beta-N-acetylglucosaminyltransferase activity"/>
    <property type="evidence" value="ECO:0007669"/>
    <property type="project" value="UniProtKB-UniRule"/>
</dbReference>
<dbReference type="GO" id="GO:0005975">
    <property type="term" value="P:carbohydrate metabolic process"/>
    <property type="evidence" value="ECO:0007669"/>
    <property type="project" value="InterPro"/>
</dbReference>
<dbReference type="GO" id="GO:0051301">
    <property type="term" value="P:cell division"/>
    <property type="evidence" value="ECO:0007669"/>
    <property type="project" value="UniProtKB-KW"/>
</dbReference>
<dbReference type="GO" id="GO:0071555">
    <property type="term" value="P:cell wall organization"/>
    <property type="evidence" value="ECO:0007669"/>
    <property type="project" value="UniProtKB-KW"/>
</dbReference>
<dbReference type="GO" id="GO:0030259">
    <property type="term" value="P:lipid glycosylation"/>
    <property type="evidence" value="ECO:0007669"/>
    <property type="project" value="UniProtKB-UniRule"/>
</dbReference>
<dbReference type="GO" id="GO:0009252">
    <property type="term" value="P:peptidoglycan biosynthetic process"/>
    <property type="evidence" value="ECO:0007669"/>
    <property type="project" value="UniProtKB-UniRule"/>
</dbReference>
<dbReference type="GO" id="GO:0008360">
    <property type="term" value="P:regulation of cell shape"/>
    <property type="evidence" value="ECO:0007669"/>
    <property type="project" value="UniProtKB-KW"/>
</dbReference>
<dbReference type="CDD" id="cd03785">
    <property type="entry name" value="GT28_MurG"/>
    <property type="match status" value="1"/>
</dbReference>
<dbReference type="Gene3D" id="3.40.50.2000">
    <property type="entry name" value="Glycogen Phosphorylase B"/>
    <property type="match status" value="2"/>
</dbReference>
<dbReference type="HAMAP" id="MF_00033">
    <property type="entry name" value="MurG"/>
    <property type="match status" value="1"/>
</dbReference>
<dbReference type="InterPro" id="IPR006009">
    <property type="entry name" value="GlcNAc_MurG"/>
</dbReference>
<dbReference type="InterPro" id="IPR007235">
    <property type="entry name" value="Glyco_trans_28_C"/>
</dbReference>
<dbReference type="InterPro" id="IPR004276">
    <property type="entry name" value="GlycoTrans_28_N"/>
</dbReference>
<dbReference type="NCBIfam" id="TIGR01133">
    <property type="entry name" value="murG"/>
    <property type="match status" value="1"/>
</dbReference>
<dbReference type="PANTHER" id="PTHR21015:SF22">
    <property type="entry name" value="GLYCOSYLTRANSFERASE"/>
    <property type="match status" value="1"/>
</dbReference>
<dbReference type="PANTHER" id="PTHR21015">
    <property type="entry name" value="UDP-N-ACETYLGLUCOSAMINE--N-ACETYLMURAMYL-(PENTAPEPTIDE) PYROPHOSPHORYL-UNDECAPRENOL N-ACETYLGLUCOSAMINE TRANSFERASE 1"/>
    <property type="match status" value="1"/>
</dbReference>
<dbReference type="Pfam" id="PF04101">
    <property type="entry name" value="Glyco_tran_28_C"/>
    <property type="match status" value="1"/>
</dbReference>
<dbReference type="Pfam" id="PF03033">
    <property type="entry name" value="Glyco_transf_28"/>
    <property type="match status" value="1"/>
</dbReference>
<dbReference type="SUPFAM" id="SSF53756">
    <property type="entry name" value="UDP-Glycosyltransferase/glycogen phosphorylase"/>
    <property type="match status" value="1"/>
</dbReference>
<accession>A2RJQ4</accession>